<gene>
    <name evidence="1" type="primary">nuoC</name>
    <name evidence="1" type="synonym">nuoCD</name>
    <name evidence="1" type="synonym">nuoD</name>
    <name type="ordered locus">SSON_2343</name>
</gene>
<proteinExistence type="inferred from homology"/>
<evidence type="ECO:0000255" key="1">
    <source>
        <dbReference type="HAMAP-Rule" id="MF_01359"/>
    </source>
</evidence>
<accession>Q3YZS4</accession>
<feature type="chain" id="PRO_0000358700" description="NADH-quinone oxidoreductase subunit C/D">
    <location>
        <begin position="1"/>
        <end position="600"/>
    </location>
</feature>
<feature type="region of interest" description="NADH dehydrogenase I subunit C" evidence="1">
    <location>
        <begin position="1"/>
        <end position="190"/>
    </location>
</feature>
<feature type="region of interest" description="NADH dehydrogenase I subunit D" evidence="1">
    <location>
        <begin position="214"/>
        <end position="600"/>
    </location>
</feature>
<keyword id="KW-0997">Cell inner membrane</keyword>
<keyword id="KW-1003">Cell membrane</keyword>
<keyword id="KW-0472">Membrane</keyword>
<keyword id="KW-0511">Multifunctional enzyme</keyword>
<keyword id="KW-0520">NAD</keyword>
<keyword id="KW-0874">Quinone</keyword>
<keyword id="KW-1185">Reference proteome</keyword>
<keyword id="KW-1278">Translocase</keyword>
<keyword id="KW-0813">Transport</keyword>
<keyword id="KW-0830">Ubiquinone</keyword>
<organism>
    <name type="scientific">Shigella sonnei (strain Ss046)</name>
    <dbReference type="NCBI Taxonomy" id="300269"/>
    <lineage>
        <taxon>Bacteria</taxon>
        <taxon>Pseudomonadati</taxon>
        <taxon>Pseudomonadota</taxon>
        <taxon>Gammaproteobacteria</taxon>
        <taxon>Enterobacterales</taxon>
        <taxon>Enterobacteriaceae</taxon>
        <taxon>Shigella</taxon>
    </lineage>
</organism>
<reference key="1">
    <citation type="journal article" date="2005" name="Nucleic Acids Res.">
        <title>Genome dynamics and diversity of Shigella species, the etiologic agents of bacillary dysentery.</title>
        <authorList>
            <person name="Yang F."/>
            <person name="Yang J."/>
            <person name="Zhang X."/>
            <person name="Chen L."/>
            <person name="Jiang Y."/>
            <person name="Yan Y."/>
            <person name="Tang X."/>
            <person name="Wang J."/>
            <person name="Xiong Z."/>
            <person name="Dong J."/>
            <person name="Xue Y."/>
            <person name="Zhu Y."/>
            <person name="Xu X."/>
            <person name="Sun L."/>
            <person name="Chen S."/>
            <person name="Nie H."/>
            <person name="Peng J."/>
            <person name="Xu J."/>
            <person name="Wang Y."/>
            <person name="Yuan Z."/>
            <person name="Wen Y."/>
            <person name="Yao Z."/>
            <person name="Shen Y."/>
            <person name="Qiang B."/>
            <person name="Hou Y."/>
            <person name="Yu J."/>
            <person name="Jin Q."/>
        </authorList>
    </citation>
    <scope>NUCLEOTIDE SEQUENCE [LARGE SCALE GENOMIC DNA]</scope>
    <source>
        <strain>Ss046</strain>
    </source>
</reference>
<sequence>MVNNMTDLTAQEPAWQTRDHLDDPVIGELRNRFGPDAFTVQATRTGVPVVWIKREQLLEVGDFLKKLPKPYVMLFDLHGMDERLRTHREGLPAADFSVFYHLISIDRNRDIMLKVALAENDLHVPTFTKLFPNANWYERETWDLFGITFDGHPNLRRIMMPQTWKGHPLRKDYPARATEFSPFELTKAKQDLEMEALTFKPEEWGMKRGTENEDFMFLNLGPNHPSAHGAFRIVLQLDGEEIVDCVPDIGYHHRGAEKMGERQSWHSYIPYTDRIEYLGGCVNEMPYVLAVEKLAGITVPDRVNVIRVMLSELFRINSHLLYISTFIQDVGAMTPVFFAFTDRQKIYDLVEAITGFRMHPAWFRIGGVAHDLPRGWDRLLREFLDWMPKRLASYEKAALQNTILKGRSQGVAAYGAKEALEWGTTGAGLRATGIDFDVRKARPYSGYENFDFEIPVGGGVSDCYTRVMLKVEELRQSLRILEQCLNNMPEGPFKADHPLTTPPPKERTLQHIETLITHFLQVSWGPVMPANESFQMIEATKGINSYYLTSDGSTMSYRTRIRTPSYAHLQQIPAAIRGSLVSDLIVYLGSIDFVMSDVDR</sequence>
<protein>
    <recommendedName>
        <fullName evidence="1">NADH-quinone oxidoreductase subunit C/D</fullName>
        <ecNumber evidence="1">7.1.1.-</ecNumber>
    </recommendedName>
    <alternativeName>
        <fullName evidence="1">NADH dehydrogenase I subunit C/D</fullName>
    </alternativeName>
    <alternativeName>
        <fullName evidence="1">NDH-1 subunit C/D</fullName>
    </alternativeName>
</protein>
<comment type="function">
    <text evidence="1">NDH-1 shuttles electrons from NADH, via FMN and iron-sulfur (Fe-S) centers, to quinones in the respiratory chain. The immediate electron acceptor for the enzyme in this species is believed to be ubiquinone. Couples the redox reaction to proton translocation (for every two electrons transferred, four hydrogen ions are translocated across the cytoplasmic membrane), and thus conserves the redox energy in a proton gradient.</text>
</comment>
<comment type="catalytic activity">
    <reaction evidence="1">
        <text>a quinone + NADH + 5 H(+)(in) = a quinol + NAD(+) + 4 H(+)(out)</text>
        <dbReference type="Rhea" id="RHEA:57888"/>
        <dbReference type="ChEBI" id="CHEBI:15378"/>
        <dbReference type="ChEBI" id="CHEBI:24646"/>
        <dbReference type="ChEBI" id="CHEBI:57540"/>
        <dbReference type="ChEBI" id="CHEBI:57945"/>
        <dbReference type="ChEBI" id="CHEBI:132124"/>
    </reaction>
</comment>
<comment type="subunit">
    <text evidence="1">NDH-1 is composed of 13 different subunits. Subunits NuoB, CD, E, F, and G constitute the peripheral sector of the complex.</text>
</comment>
<comment type="subcellular location">
    <subcellularLocation>
        <location evidence="1">Cell inner membrane</location>
        <topology evidence="1">Peripheral membrane protein</topology>
        <orientation evidence="1">Cytoplasmic side</orientation>
    </subcellularLocation>
</comment>
<comment type="similarity">
    <text evidence="1">In the N-terminal section; belongs to the complex I 30 kDa subunit family.</text>
</comment>
<comment type="similarity">
    <text evidence="1">In the C-terminal section; belongs to the complex I 49 kDa subunit family.</text>
</comment>
<dbReference type="EC" id="7.1.1.-" evidence="1"/>
<dbReference type="EMBL" id="CP000038">
    <property type="protein sequence ID" value="AAZ88988.1"/>
    <property type="molecule type" value="Genomic_DNA"/>
</dbReference>
<dbReference type="RefSeq" id="WP_000247878.1">
    <property type="nucleotide sequence ID" value="NC_007384.1"/>
</dbReference>
<dbReference type="SMR" id="Q3YZS4"/>
<dbReference type="GeneID" id="93774888"/>
<dbReference type="KEGG" id="ssn:SSON_2343"/>
<dbReference type="HOGENOM" id="CLU_015134_3_2_6"/>
<dbReference type="Proteomes" id="UP000002529">
    <property type="component" value="Chromosome"/>
</dbReference>
<dbReference type="GO" id="GO:0030964">
    <property type="term" value="C:NADH dehydrogenase complex"/>
    <property type="evidence" value="ECO:0007669"/>
    <property type="project" value="InterPro"/>
</dbReference>
<dbReference type="GO" id="GO:0005886">
    <property type="term" value="C:plasma membrane"/>
    <property type="evidence" value="ECO:0007669"/>
    <property type="project" value="UniProtKB-SubCell"/>
</dbReference>
<dbReference type="GO" id="GO:0051287">
    <property type="term" value="F:NAD binding"/>
    <property type="evidence" value="ECO:0007669"/>
    <property type="project" value="InterPro"/>
</dbReference>
<dbReference type="GO" id="GO:0008137">
    <property type="term" value="F:NADH dehydrogenase (ubiquinone) activity"/>
    <property type="evidence" value="ECO:0007669"/>
    <property type="project" value="InterPro"/>
</dbReference>
<dbReference type="GO" id="GO:0050136">
    <property type="term" value="F:NADH:ubiquinone reductase (non-electrogenic) activity"/>
    <property type="evidence" value="ECO:0007669"/>
    <property type="project" value="UniProtKB-UniRule"/>
</dbReference>
<dbReference type="GO" id="GO:0048038">
    <property type="term" value="F:quinone binding"/>
    <property type="evidence" value="ECO:0007669"/>
    <property type="project" value="UniProtKB-KW"/>
</dbReference>
<dbReference type="FunFam" id="1.10.645.10:FF:000001">
    <property type="entry name" value="NADH-quinone oxidoreductase subunit C/D"/>
    <property type="match status" value="1"/>
</dbReference>
<dbReference type="FunFam" id="3.30.460.80:FF:000001">
    <property type="entry name" value="NADH-quinone oxidoreductase subunit C/D"/>
    <property type="match status" value="1"/>
</dbReference>
<dbReference type="Gene3D" id="1.10.645.10">
    <property type="entry name" value="Cytochrome-c3 Hydrogenase, chain B"/>
    <property type="match status" value="1"/>
</dbReference>
<dbReference type="Gene3D" id="3.30.460.80">
    <property type="entry name" value="NADH:ubiquinone oxidoreductase, 30kDa subunit"/>
    <property type="match status" value="1"/>
</dbReference>
<dbReference type="HAMAP" id="MF_01357">
    <property type="entry name" value="NDH1_NuoC"/>
    <property type="match status" value="1"/>
</dbReference>
<dbReference type="HAMAP" id="MF_01359">
    <property type="entry name" value="NDH1_NuoCD_1"/>
    <property type="match status" value="1"/>
</dbReference>
<dbReference type="HAMAP" id="MF_01358">
    <property type="entry name" value="NDH1_NuoD"/>
    <property type="match status" value="1"/>
</dbReference>
<dbReference type="InterPro" id="IPR010218">
    <property type="entry name" value="NADH_DH_suC"/>
</dbReference>
<dbReference type="InterPro" id="IPR023062">
    <property type="entry name" value="NADH_DH_suCD"/>
</dbReference>
<dbReference type="InterPro" id="IPR001135">
    <property type="entry name" value="NADH_Q_OxRdtase_suD"/>
</dbReference>
<dbReference type="InterPro" id="IPR037232">
    <property type="entry name" value="NADH_quin_OxRdtase_su_C/D-like"/>
</dbReference>
<dbReference type="InterPro" id="IPR001268">
    <property type="entry name" value="NADH_UbQ_OxRdtase_30kDa_su"/>
</dbReference>
<dbReference type="InterPro" id="IPR014029">
    <property type="entry name" value="NADH_UbQ_OxRdtase_49kDa_CS"/>
</dbReference>
<dbReference type="InterPro" id="IPR020396">
    <property type="entry name" value="NADH_UbQ_OxRdtase_CS"/>
</dbReference>
<dbReference type="InterPro" id="IPR022885">
    <property type="entry name" value="NDH1_su_D/H"/>
</dbReference>
<dbReference type="InterPro" id="IPR029014">
    <property type="entry name" value="NiFe-Hase_large"/>
</dbReference>
<dbReference type="NCBIfam" id="TIGR01961">
    <property type="entry name" value="NuoC_fam"/>
    <property type="match status" value="1"/>
</dbReference>
<dbReference type="NCBIfam" id="TIGR01962">
    <property type="entry name" value="NuoD"/>
    <property type="match status" value="1"/>
</dbReference>
<dbReference type="NCBIfam" id="NF004739">
    <property type="entry name" value="PRK06075.1"/>
    <property type="match status" value="1"/>
</dbReference>
<dbReference type="NCBIfam" id="NF008728">
    <property type="entry name" value="PRK11742.1"/>
    <property type="match status" value="1"/>
</dbReference>
<dbReference type="PANTHER" id="PTHR11993:SF45">
    <property type="entry name" value="NADH-QUINONE OXIDOREDUCTASE SUBUNIT C_D"/>
    <property type="match status" value="1"/>
</dbReference>
<dbReference type="PANTHER" id="PTHR11993">
    <property type="entry name" value="NADH-UBIQUINONE OXIDOREDUCTASE 49 KDA SUBUNIT"/>
    <property type="match status" value="1"/>
</dbReference>
<dbReference type="Pfam" id="PF00329">
    <property type="entry name" value="Complex1_30kDa"/>
    <property type="match status" value="1"/>
</dbReference>
<dbReference type="Pfam" id="PF00346">
    <property type="entry name" value="Complex1_49kDa"/>
    <property type="match status" value="1"/>
</dbReference>
<dbReference type="SUPFAM" id="SSF56762">
    <property type="entry name" value="HydB/Nqo4-like"/>
    <property type="match status" value="1"/>
</dbReference>
<dbReference type="SUPFAM" id="SSF143243">
    <property type="entry name" value="Nqo5-like"/>
    <property type="match status" value="1"/>
</dbReference>
<dbReference type="PROSITE" id="PS00542">
    <property type="entry name" value="COMPLEX1_30K"/>
    <property type="match status" value="1"/>
</dbReference>
<dbReference type="PROSITE" id="PS00535">
    <property type="entry name" value="COMPLEX1_49K"/>
    <property type="match status" value="1"/>
</dbReference>
<name>NUOCD_SHISS</name>